<reference key="1">
    <citation type="journal article" date="2000" name="Nucleic Acids Res.">
        <title>Complete genome sequence of the alkaliphilic bacterium Bacillus halodurans and genomic sequence comparison with Bacillus subtilis.</title>
        <authorList>
            <person name="Takami H."/>
            <person name="Nakasone K."/>
            <person name="Takaki Y."/>
            <person name="Maeno G."/>
            <person name="Sasaki R."/>
            <person name="Masui N."/>
            <person name="Fuji F."/>
            <person name="Hirama C."/>
            <person name="Nakamura Y."/>
            <person name="Ogasawara N."/>
            <person name="Kuhara S."/>
            <person name="Horikoshi K."/>
        </authorList>
    </citation>
    <scope>NUCLEOTIDE SEQUENCE [LARGE SCALE GENOMIC DNA]</scope>
    <source>
        <strain>ATCC BAA-125 / DSM 18197 / FERM 7344 / JCM 9153 / C-125</strain>
    </source>
</reference>
<feature type="chain" id="PRO_0000220145" description="L-ectoine synthase">
    <location>
        <begin position="1"/>
        <end position="129"/>
    </location>
</feature>
<keyword id="KW-0456">Lyase</keyword>
<keyword id="KW-1185">Reference proteome</keyword>
<accession>Q9KED5</accession>
<sequence>MKVVKLEDVIGTEQEVKGENWTSRRLLLKKDGMGYSVHDTIIKAGTETHIWYQNHLEAVYCIEGEGEVETVKDGKVWPIKANEIYALDEHDEHLLRAKTDMRMVCVFNPPITGKETHDENGVYPLVDDE</sequence>
<evidence type="ECO:0000255" key="1">
    <source>
        <dbReference type="HAMAP-Rule" id="MF_01255"/>
    </source>
</evidence>
<comment type="function">
    <text evidence="1">Catalyzes the circularization of gamma-N-acetyl-alpha,gamma-diaminobutyric acid (ADABA) to ectoine (1,4,5,6-tetrahydro-2-methyl-4-pyrimidine carboxylic acid), which is an excellent osmoprotectant.</text>
</comment>
<comment type="catalytic activity">
    <reaction evidence="1">
        <text>(2S)-4-acetamido-2-aminobutanoate = L-ectoine + H2O</text>
        <dbReference type="Rhea" id="RHEA:17281"/>
        <dbReference type="ChEBI" id="CHEBI:15377"/>
        <dbReference type="ChEBI" id="CHEBI:58515"/>
        <dbReference type="ChEBI" id="CHEBI:58929"/>
        <dbReference type="EC" id="4.2.1.108"/>
    </reaction>
</comment>
<comment type="pathway">
    <text evidence="1">Amine and polyamine biosynthesis; ectoine biosynthesis; L-ectoine from L-aspartate 4-semialdehyde: step 3/3.</text>
</comment>
<comment type="similarity">
    <text evidence="1">Belongs to the ectoine synthase family.</text>
</comment>
<organism>
    <name type="scientific">Halalkalibacterium halodurans (strain ATCC BAA-125 / DSM 18197 / FERM 7344 / JCM 9153 / C-125)</name>
    <name type="common">Bacillus halodurans</name>
    <dbReference type="NCBI Taxonomy" id="272558"/>
    <lineage>
        <taxon>Bacteria</taxon>
        <taxon>Bacillati</taxon>
        <taxon>Bacillota</taxon>
        <taxon>Bacilli</taxon>
        <taxon>Bacillales</taxon>
        <taxon>Bacillaceae</taxon>
        <taxon>Halalkalibacterium (ex Joshi et al. 2022)</taxon>
    </lineage>
</organism>
<protein>
    <recommendedName>
        <fullName evidence="1">L-ectoine synthase</fullName>
        <ecNumber evidence="1">4.2.1.108</ecNumber>
    </recommendedName>
    <alternativeName>
        <fullName evidence="1">N-acetyldiaminobutyrate dehydratase</fullName>
    </alternativeName>
</protein>
<gene>
    <name evidence="1" type="primary">ectC</name>
    <name type="ordered locus">BH0918</name>
</gene>
<dbReference type="EC" id="4.2.1.108" evidence="1"/>
<dbReference type="EMBL" id="BA000004">
    <property type="protein sequence ID" value="BAB04637.1"/>
    <property type="molecule type" value="Genomic_DNA"/>
</dbReference>
<dbReference type="PIR" id="F83764">
    <property type="entry name" value="F83764"/>
</dbReference>
<dbReference type="RefSeq" id="WP_010897090.1">
    <property type="nucleotide sequence ID" value="NC_002570.2"/>
</dbReference>
<dbReference type="SMR" id="Q9KED5"/>
<dbReference type="STRING" id="272558.gene:10726792"/>
<dbReference type="KEGG" id="bha:BH0918"/>
<dbReference type="eggNOG" id="COG1917">
    <property type="taxonomic scope" value="Bacteria"/>
</dbReference>
<dbReference type="HOGENOM" id="CLU_154525_0_0_9"/>
<dbReference type="OrthoDB" id="4406415at2"/>
<dbReference type="UniPathway" id="UPA00067">
    <property type="reaction ID" value="UER00123"/>
</dbReference>
<dbReference type="Proteomes" id="UP000001258">
    <property type="component" value="Chromosome"/>
</dbReference>
<dbReference type="GO" id="GO:0033990">
    <property type="term" value="F:ectoine synthase activity"/>
    <property type="evidence" value="ECO:0007669"/>
    <property type="project" value="UniProtKB-EC"/>
</dbReference>
<dbReference type="GO" id="GO:0019491">
    <property type="term" value="P:ectoine biosynthetic process"/>
    <property type="evidence" value="ECO:0007669"/>
    <property type="project" value="UniProtKB-UniRule"/>
</dbReference>
<dbReference type="CDD" id="cd06978">
    <property type="entry name" value="cupin_EctC"/>
    <property type="match status" value="1"/>
</dbReference>
<dbReference type="Gene3D" id="2.60.120.10">
    <property type="entry name" value="Jelly Rolls"/>
    <property type="match status" value="1"/>
</dbReference>
<dbReference type="HAMAP" id="MF_01255">
    <property type="entry name" value="Ectoine_synth"/>
    <property type="match status" value="1"/>
</dbReference>
<dbReference type="InterPro" id="IPR010462">
    <property type="entry name" value="Ectoine_synth"/>
</dbReference>
<dbReference type="InterPro" id="IPR014710">
    <property type="entry name" value="RmlC-like_jellyroll"/>
</dbReference>
<dbReference type="InterPro" id="IPR011051">
    <property type="entry name" value="RmlC_Cupin_sf"/>
</dbReference>
<dbReference type="NCBIfam" id="NF009806">
    <property type="entry name" value="PRK13290.1"/>
    <property type="match status" value="1"/>
</dbReference>
<dbReference type="PANTHER" id="PTHR39289">
    <property type="match status" value="1"/>
</dbReference>
<dbReference type="PANTHER" id="PTHR39289:SF1">
    <property type="entry name" value="L-ECTOINE SYNTHASE"/>
    <property type="match status" value="1"/>
</dbReference>
<dbReference type="Pfam" id="PF06339">
    <property type="entry name" value="Ectoine_synth"/>
    <property type="match status" value="1"/>
</dbReference>
<dbReference type="SUPFAM" id="SSF51182">
    <property type="entry name" value="RmlC-like cupins"/>
    <property type="match status" value="1"/>
</dbReference>
<name>ECTC_HALH5</name>
<proteinExistence type="inferred from homology"/>